<accession>P60756</accession>
<protein>
    <recommendedName>
        <fullName>MAM domain-containing glycosylphosphatidylinositol anchor protein 2</fullName>
    </recommendedName>
    <alternativeName>
        <fullName>MAM domain-containing protein 1</fullName>
    </alternativeName>
</protein>
<gene>
    <name type="primary">Mdga2</name>
    <name type="synonym">Mamdc1</name>
</gene>
<organism>
    <name type="scientific">Rattus norvegicus</name>
    <name type="common">Rat</name>
    <dbReference type="NCBI Taxonomy" id="10116"/>
    <lineage>
        <taxon>Eukaryota</taxon>
        <taxon>Metazoa</taxon>
        <taxon>Chordata</taxon>
        <taxon>Craniata</taxon>
        <taxon>Vertebrata</taxon>
        <taxon>Euteleostomi</taxon>
        <taxon>Mammalia</taxon>
        <taxon>Eutheria</taxon>
        <taxon>Euarchontoglires</taxon>
        <taxon>Glires</taxon>
        <taxon>Rodentia</taxon>
        <taxon>Myomorpha</taxon>
        <taxon>Muroidea</taxon>
        <taxon>Muridae</taxon>
        <taxon>Murinae</taxon>
        <taxon>Rattus</taxon>
    </lineage>
</organism>
<dbReference type="EMBL" id="AY371924">
    <property type="protein sequence ID" value="AAQ75750.1"/>
    <property type="molecule type" value="mRNA"/>
</dbReference>
<dbReference type="RefSeq" id="NP_954890.1">
    <property type="nucleotide sequence ID" value="NM_199269.1"/>
</dbReference>
<dbReference type="SMR" id="P60756"/>
<dbReference type="FunCoup" id="P60756">
    <property type="interactions" value="1497"/>
</dbReference>
<dbReference type="STRING" id="10116.ENSRNOP00000000767"/>
<dbReference type="GlyCosmos" id="P60756">
    <property type="glycosylation" value="8 sites, No reported glycans"/>
</dbReference>
<dbReference type="GlyGen" id="P60756">
    <property type="glycosylation" value="8 sites"/>
</dbReference>
<dbReference type="PhosphoSitePlus" id="P60756"/>
<dbReference type="PaxDb" id="10116-ENSRNOP00000000767"/>
<dbReference type="Ensembl" id="ENSRNOT00000000767.6">
    <property type="protein sequence ID" value="ENSRNOP00000000767.6"/>
    <property type="gene ID" value="ENSRNOG00000000618.8"/>
</dbReference>
<dbReference type="GeneID" id="314180"/>
<dbReference type="KEGG" id="rno:314180"/>
<dbReference type="UCSC" id="RGD:735131">
    <property type="organism name" value="rat"/>
</dbReference>
<dbReference type="AGR" id="RGD:735131"/>
<dbReference type="CTD" id="161357"/>
<dbReference type="RGD" id="735131">
    <property type="gene designation" value="Mdga2"/>
</dbReference>
<dbReference type="eggNOG" id="ENOG502QSMD">
    <property type="taxonomic scope" value="Eukaryota"/>
</dbReference>
<dbReference type="GeneTree" id="ENSGT00940000155369"/>
<dbReference type="HOGENOM" id="CLU_014908_0_0_1"/>
<dbReference type="InParanoid" id="P60756"/>
<dbReference type="OrthoDB" id="6107927at2759"/>
<dbReference type="PhylomeDB" id="P60756"/>
<dbReference type="TreeFam" id="TF330345"/>
<dbReference type="PRO" id="PR:P60756"/>
<dbReference type="Proteomes" id="UP000002494">
    <property type="component" value="Chromosome 6"/>
</dbReference>
<dbReference type="GO" id="GO:0098982">
    <property type="term" value="C:GABA-ergic synapse"/>
    <property type="evidence" value="ECO:0000266"/>
    <property type="project" value="RGD"/>
</dbReference>
<dbReference type="GO" id="GO:0098978">
    <property type="term" value="C:glutamatergic synapse"/>
    <property type="evidence" value="ECO:0000314"/>
    <property type="project" value="SynGO"/>
</dbReference>
<dbReference type="GO" id="GO:0098839">
    <property type="term" value="C:postsynaptic density membrane"/>
    <property type="evidence" value="ECO:0000314"/>
    <property type="project" value="SynGO"/>
</dbReference>
<dbReference type="GO" id="GO:0098552">
    <property type="term" value="C:side of membrane"/>
    <property type="evidence" value="ECO:0007669"/>
    <property type="project" value="UniProtKB-KW"/>
</dbReference>
<dbReference type="GO" id="GO:0010467">
    <property type="term" value="P:gene expression"/>
    <property type="evidence" value="ECO:0000266"/>
    <property type="project" value="RGD"/>
</dbReference>
<dbReference type="GO" id="GO:0061744">
    <property type="term" value="P:motor behavior"/>
    <property type="evidence" value="ECO:0000266"/>
    <property type="project" value="RGD"/>
</dbReference>
<dbReference type="GO" id="GO:0043524">
    <property type="term" value="P:negative regulation of neuron apoptotic process"/>
    <property type="evidence" value="ECO:0000266"/>
    <property type="project" value="RGD"/>
</dbReference>
<dbReference type="GO" id="GO:0050905">
    <property type="term" value="P:neuromuscular process"/>
    <property type="evidence" value="ECO:0000266"/>
    <property type="project" value="RGD"/>
</dbReference>
<dbReference type="GO" id="GO:0001764">
    <property type="term" value="P:neuron migration"/>
    <property type="evidence" value="ECO:0000266"/>
    <property type="project" value="RGD"/>
</dbReference>
<dbReference type="GO" id="GO:0007389">
    <property type="term" value="P:pattern specification process"/>
    <property type="evidence" value="ECO:0000266"/>
    <property type="project" value="RGD"/>
</dbReference>
<dbReference type="GO" id="GO:1905606">
    <property type="term" value="P:regulation of presynapse assembly"/>
    <property type="evidence" value="ECO:0000266"/>
    <property type="project" value="RGD"/>
</dbReference>
<dbReference type="GO" id="GO:0090128">
    <property type="term" value="P:regulation of synapse maturation"/>
    <property type="evidence" value="ECO:0000314"/>
    <property type="project" value="SynGO"/>
</dbReference>
<dbReference type="GO" id="GO:0099179">
    <property type="term" value="P:regulation of synaptic membrane adhesion"/>
    <property type="evidence" value="ECO:0000266"/>
    <property type="project" value="RGD"/>
</dbReference>
<dbReference type="GO" id="GO:0021522">
    <property type="term" value="P:spinal cord motor neuron differentiation"/>
    <property type="evidence" value="ECO:0000270"/>
    <property type="project" value="HGNC-UCL"/>
</dbReference>
<dbReference type="CDD" id="cd00096">
    <property type="entry name" value="Ig"/>
    <property type="match status" value="2"/>
</dbReference>
<dbReference type="CDD" id="cd06263">
    <property type="entry name" value="MAM"/>
    <property type="match status" value="1"/>
</dbReference>
<dbReference type="FunFam" id="2.60.40.10:FF:000240">
    <property type="entry name" value="MAM domain containing glycosylphosphatidylinositol anchor 1"/>
    <property type="match status" value="1"/>
</dbReference>
<dbReference type="FunFam" id="2.60.40.10:FF:000262">
    <property type="entry name" value="MAM domain containing glycosylphosphatidylinositol anchor 1"/>
    <property type="match status" value="1"/>
</dbReference>
<dbReference type="FunFam" id="2.60.40.10:FF:000303">
    <property type="entry name" value="MAM domain containing glycosylphosphatidylinositol anchor 1"/>
    <property type="match status" value="1"/>
</dbReference>
<dbReference type="FunFam" id="2.60.120.200:FF:000019">
    <property type="entry name" value="MAM domain containing glycosylphosphatidylinositol anchor 2"/>
    <property type="match status" value="1"/>
</dbReference>
<dbReference type="FunFam" id="2.60.40.10:FF:000165">
    <property type="entry name" value="MAM domain containing glycosylphosphatidylinositol anchor 2"/>
    <property type="match status" value="1"/>
</dbReference>
<dbReference type="FunFam" id="2.60.40.10:FF:000654">
    <property type="entry name" value="MAM domain containing glycosylphosphatidylinositol anchor 2"/>
    <property type="match status" value="1"/>
</dbReference>
<dbReference type="FunFam" id="2.60.40.10:FF:000243">
    <property type="entry name" value="MAM domain-containing glycosylphosphatidylinositol anchor protein 1"/>
    <property type="match status" value="1"/>
</dbReference>
<dbReference type="Gene3D" id="2.60.120.200">
    <property type="match status" value="1"/>
</dbReference>
<dbReference type="Gene3D" id="2.60.40.10">
    <property type="entry name" value="Immunoglobulins"/>
    <property type="match status" value="7"/>
</dbReference>
<dbReference type="InterPro" id="IPR050958">
    <property type="entry name" value="Cell_Adh-Cytoskel_Orgn"/>
</dbReference>
<dbReference type="InterPro" id="IPR013320">
    <property type="entry name" value="ConA-like_dom_sf"/>
</dbReference>
<dbReference type="InterPro" id="IPR003961">
    <property type="entry name" value="FN3_dom"/>
</dbReference>
<dbReference type="InterPro" id="IPR036116">
    <property type="entry name" value="FN3_sf"/>
</dbReference>
<dbReference type="InterPro" id="IPR007110">
    <property type="entry name" value="Ig-like_dom"/>
</dbReference>
<dbReference type="InterPro" id="IPR036179">
    <property type="entry name" value="Ig-like_dom_sf"/>
</dbReference>
<dbReference type="InterPro" id="IPR013783">
    <property type="entry name" value="Ig-like_fold"/>
</dbReference>
<dbReference type="InterPro" id="IPR013098">
    <property type="entry name" value="Ig_I-set"/>
</dbReference>
<dbReference type="InterPro" id="IPR003599">
    <property type="entry name" value="Ig_sub"/>
</dbReference>
<dbReference type="InterPro" id="IPR003598">
    <property type="entry name" value="Ig_sub2"/>
</dbReference>
<dbReference type="InterPro" id="IPR000998">
    <property type="entry name" value="MAM_dom"/>
</dbReference>
<dbReference type="PANTHER" id="PTHR45080">
    <property type="entry name" value="CONTACTIN 5"/>
    <property type="match status" value="1"/>
</dbReference>
<dbReference type="PANTHER" id="PTHR45080:SF35">
    <property type="entry name" value="MAM DOMAIN-CONTAINING GLYCOSYLPHOSPHATIDYLINOSITOL ANCHOR 2"/>
    <property type="match status" value="1"/>
</dbReference>
<dbReference type="Pfam" id="PF07679">
    <property type="entry name" value="I-set"/>
    <property type="match status" value="1"/>
</dbReference>
<dbReference type="Pfam" id="PF13927">
    <property type="entry name" value="Ig_3"/>
    <property type="match status" value="4"/>
</dbReference>
<dbReference type="Pfam" id="PF00629">
    <property type="entry name" value="MAM"/>
    <property type="match status" value="1"/>
</dbReference>
<dbReference type="SMART" id="SM00409">
    <property type="entry name" value="IG"/>
    <property type="match status" value="6"/>
</dbReference>
<dbReference type="SMART" id="SM00408">
    <property type="entry name" value="IGc2"/>
    <property type="match status" value="6"/>
</dbReference>
<dbReference type="SMART" id="SM00137">
    <property type="entry name" value="MAM"/>
    <property type="match status" value="1"/>
</dbReference>
<dbReference type="SUPFAM" id="SSF49899">
    <property type="entry name" value="Concanavalin A-like lectins/glucanases"/>
    <property type="match status" value="1"/>
</dbReference>
<dbReference type="SUPFAM" id="SSF49265">
    <property type="entry name" value="Fibronectin type III"/>
    <property type="match status" value="1"/>
</dbReference>
<dbReference type="SUPFAM" id="SSF48726">
    <property type="entry name" value="Immunoglobulin"/>
    <property type="match status" value="6"/>
</dbReference>
<dbReference type="PROSITE" id="PS50853">
    <property type="entry name" value="FN3"/>
    <property type="match status" value="1"/>
</dbReference>
<dbReference type="PROSITE" id="PS50835">
    <property type="entry name" value="IG_LIKE"/>
    <property type="match status" value="6"/>
</dbReference>
<dbReference type="PROSITE" id="PS50060">
    <property type="entry name" value="MAM_2"/>
    <property type="match status" value="1"/>
</dbReference>
<feature type="signal peptide" evidence="2">
    <location>
        <begin position="1"/>
        <end position="25"/>
    </location>
</feature>
<feature type="chain" id="PRO_0000014861" description="MAM domain-containing glycosylphosphatidylinositol anchor protein 2">
    <location>
        <begin position="26"/>
        <end position="924"/>
    </location>
</feature>
<feature type="propeptide" id="PRO_0000292045" description="Removed in mature form" evidence="2">
    <location>
        <begin position="925"/>
        <end position="949"/>
    </location>
</feature>
<feature type="domain" description="Ig-like 1">
    <location>
        <begin position="27"/>
        <end position="127"/>
    </location>
</feature>
<feature type="domain" description="Ig-like 2">
    <location>
        <begin position="134"/>
        <end position="232"/>
    </location>
</feature>
<feature type="domain" description="Ig-like 3">
    <location>
        <begin position="242"/>
        <end position="328"/>
    </location>
</feature>
<feature type="domain" description="Ig-like 4">
    <location>
        <begin position="340"/>
        <end position="436"/>
    </location>
</feature>
<feature type="domain" description="Ig-like 5">
    <location>
        <begin position="442"/>
        <end position="533"/>
    </location>
</feature>
<feature type="domain" description="Ig-like 6">
    <location>
        <begin position="540"/>
        <end position="627"/>
    </location>
</feature>
<feature type="domain" description="Fibronectin type-III" evidence="5">
    <location>
        <begin position="638"/>
        <end position="738"/>
    </location>
</feature>
<feature type="domain" description="MAM" evidence="4">
    <location>
        <begin position="739"/>
        <end position="914"/>
    </location>
</feature>
<feature type="lipid moiety-binding region" description="GPI-anchor amidated aspartate" evidence="2">
    <location>
        <position position="924"/>
    </location>
</feature>
<feature type="glycosylation site" description="N-linked (GlcNAc...) asparagine" evidence="2">
    <location>
        <position position="92"/>
    </location>
</feature>
<feature type="glycosylation site" description="N-linked (GlcNAc...) asparagine" evidence="2">
    <location>
        <position position="213"/>
    </location>
</feature>
<feature type="glycosylation site" description="N-linked (GlcNAc...) asparagine" evidence="2">
    <location>
        <position position="237"/>
    </location>
</feature>
<feature type="glycosylation site" description="N-linked (GlcNAc...) asparagine" evidence="2">
    <location>
        <position position="434"/>
    </location>
</feature>
<feature type="glycosylation site" description="N-linked (GlcNAc...) asparagine" evidence="2">
    <location>
        <position position="443"/>
    </location>
</feature>
<feature type="glycosylation site" description="N-linked (GlcNAc...) asparagine" evidence="2">
    <location>
        <position position="504"/>
    </location>
</feature>
<feature type="glycosylation site" description="N-linked (GlcNAc...) asparagine" evidence="2">
    <location>
        <position position="610"/>
    </location>
</feature>
<feature type="glycosylation site" description="N-linked (GlcNAc...) asparagine" evidence="2">
    <location>
        <position position="703"/>
    </location>
</feature>
<feature type="disulfide bond" evidence="3">
    <location>
        <begin position="62"/>
        <end position="110"/>
    </location>
</feature>
<feature type="disulfide bond" evidence="3">
    <location>
        <begin position="159"/>
        <end position="216"/>
    </location>
</feature>
<feature type="disulfide bond" evidence="3">
    <location>
        <begin position="264"/>
        <end position="310"/>
    </location>
</feature>
<feature type="disulfide bond" evidence="3">
    <location>
        <begin position="359"/>
        <end position="417"/>
    </location>
</feature>
<feature type="disulfide bond" evidence="3">
    <location>
        <begin position="465"/>
        <end position="515"/>
    </location>
</feature>
<feature type="disulfide bond" evidence="3">
    <location>
        <begin position="561"/>
        <end position="611"/>
    </location>
</feature>
<sequence length="949" mass="106719">MDLVYGLVWLLTVLLEGISGQGVYAPPTVRIVHSGLACNIEEERYSERVYTIREGETLELTCLVTGHPRPQIRWTKTAGSASDRFQDSSVFNETLRITSIQRHQGGRYYCKAENGLGSPAIKSIRVDVYYLDDPVVTVHQSIGEAKEQFYYERTVFLRCVANSNPPVRYSWRRGQEVLLQGSDKGVEIYEPFFTQGETKILKLKNLRPQDYANYSCIASVRNVCNIPDKMVSFRLSNKTASPSIKLLVDDPIVVNPGEAITLVCVTTGGEPMPSLTWVRSFGTLPEKIVLNGGTLTIPAITSDDAGTYSCIANNNVGNPAKKSTNIIVRALKKGRFWITPDPYHKDDNIQIGREVKISCQVEAVPSEELTFSWFKNGRPLRSSERMVITQTDPDVSPGTTNLDIIDLKFTDFGTYTCVASLKGGGISDISIDVNISSSTVPPNLTVPQEKSPLVTREGDTIELQCQVTGKPKPIILWSRADKEVAMPDGTMQMESYDGTLRIVNVSREMSGMYRCQTSQYNGFNVKPREALVQLIVQYPPAVEPAFLEIRQGQDRSVTMSCRVLRAYPIRVLTYEWRLGNKLLRTGQFDSQEYTEYPLKSLSNENYGVYNCSIINEAGAGRCSFLVTGKAYAPEFYYDTYNPVWQNRHRVYSYSLQWTQMNPDAVDRIVAYRLGIRQAGQQRWWEQEIKINGNIQKGELITYNLTELIKPEAYEVRLTPLTKFGEGDSTIRVIKYTGEFHCGFEDGNICLFTQDDTDNFDWTKQSTATRNTKYTPNTGPNADRSGSKEGFYMYIETSRPRLEGEKARLLSPVFSIAPKNPYGPTNSAYCFSFFYHMYGQHIGVLNVYLRLKGQTTIENPLWSSSGNKGQRWNEAHVNIYPITSFQLIFEGIRGPGIEGDIAIDDVSIAEGECAKQDLPTKNSVDGAVGILVHIWLFPVIILISILSPRR</sequence>
<comment type="function">
    <text evidence="1">May be involved in cell-cell interactions.</text>
</comment>
<comment type="subunit">
    <text evidence="1">Interacts (through the Ig-like domains) with NLGN2.</text>
</comment>
<comment type="subcellular location">
    <subcellularLocation>
        <location evidence="8">Cell membrane</location>
        <topology evidence="8">Lipid-anchor</topology>
        <topology evidence="8">GPI-anchor</topology>
    </subcellularLocation>
</comment>
<comment type="tissue specificity">
    <text evidence="6 7">Expressed predominantly in neuronal tissue. Expressed in brain.</text>
</comment>
<keyword id="KW-1003">Cell membrane</keyword>
<keyword id="KW-1015">Disulfide bond</keyword>
<keyword id="KW-0325">Glycoprotein</keyword>
<keyword id="KW-0336">GPI-anchor</keyword>
<keyword id="KW-0393">Immunoglobulin domain</keyword>
<keyword id="KW-0449">Lipoprotein</keyword>
<keyword id="KW-0472">Membrane</keyword>
<keyword id="KW-1185">Reference proteome</keyword>
<keyword id="KW-0677">Repeat</keyword>
<keyword id="KW-0732">Signal</keyword>
<name>MDGA2_RAT</name>
<proteinExistence type="evidence at transcript level"/>
<evidence type="ECO:0000250" key="1"/>
<evidence type="ECO:0000255" key="2"/>
<evidence type="ECO:0000255" key="3">
    <source>
        <dbReference type="PROSITE-ProRule" id="PRU00114"/>
    </source>
</evidence>
<evidence type="ECO:0000255" key="4">
    <source>
        <dbReference type="PROSITE-ProRule" id="PRU00128"/>
    </source>
</evidence>
<evidence type="ECO:0000255" key="5">
    <source>
        <dbReference type="PROSITE-ProRule" id="PRU00316"/>
    </source>
</evidence>
<evidence type="ECO:0000269" key="6">
    <source>
    </source>
</evidence>
<evidence type="ECO:0000269" key="7">
    <source>
    </source>
</evidence>
<evidence type="ECO:0000305" key="8"/>
<reference key="1">
    <citation type="journal article" date="2004" name="Mol. Cell. Neurosci.">
        <title>Identification and characterization of two novel brain-derived immunoglobulin superfamily members with a unique structural organization.</title>
        <authorList>
            <person name="Litwack E.D."/>
            <person name="Babey R."/>
            <person name="Buser R."/>
            <person name="Gesemann M."/>
            <person name="O'Leary D.D.M."/>
        </authorList>
    </citation>
    <scope>NUCLEOTIDE SEQUENCE [MRNA]</scope>
    <scope>TISSUE SPECIFICITY</scope>
    <source>
        <tissue>Pons</tissue>
    </source>
</reference>
<reference key="2">
    <citation type="submission" date="2003-08" db="EMBL/GenBank/DDBJ databases">
        <authorList>
            <person name="Huang C.Q."/>
            <person name="Wu S.L."/>
            <person name="Liu S."/>
        </authorList>
    </citation>
    <scope>NUCLEOTIDE SEQUENCE [MRNA]</scope>
</reference>
<reference key="3">
    <citation type="journal article" date="2013" name="Proc. Natl. Acad. Sci. U.S.A.">
        <title>MDGAs interact selectively with neuroligin-2 but not other neuroligins to regulate inhibitory synapse development.</title>
        <authorList>
            <person name="Lee K."/>
            <person name="Kim Y."/>
            <person name="Lee S.-J."/>
            <person name="Qiang Y."/>
            <person name="Lee D."/>
            <person name="Lee H.W."/>
            <person name="Kim H."/>
            <person name="Je H.S."/>
            <person name="Suedhof T.C."/>
            <person name="Ko J."/>
        </authorList>
    </citation>
    <scope>TISSUE SPECIFICITY</scope>
</reference>